<sequence length="397" mass="44008">MKKIIRLASKGDGVTEDGQFVPNSVPDDYISDDGKLEFGAHHIEPVCRHFSVCGGCRLQYADEEVYKNFLTDRIAEAFHQQALSAPVLKTAHLSPPYSRRRVALRAFKAGKKLTLGYNKTSSHQLVDIVECPLLDKNLFKAAMDLRSFLQKWLAPRSLAQIEMTLADQGIDCLLVMPFPETLEATEAITAFAAEKGFARLSIDQGYGVETRWESERVTVTLGAVPVTLPAHAFLQATKDGEQTLVHMVKEAVGDAHFVADLFSGLGTFALSFEKDKRVYAAEGMRDAVLALKQAAALAGKAVFVEHRDLFRRPLQKDELVRFECIILDPPRAGAKEQIANLAILPNGRIVYVSCNPATFARDAKTLLEAGWVLHWVKPVGQFPWSLHVEMVGLFTKM</sequence>
<protein>
    <recommendedName>
        <fullName>Uncharacterized RNA methyltransferase ZMO1179</fullName>
        <ecNumber>2.1.1.-</ecNumber>
    </recommendedName>
</protein>
<keyword id="KW-0004">4Fe-4S</keyword>
<keyword id="KW-0408">Iron</keyword>
<keyword id="KW-0411">Iron-sulfur</keyword>
<keyword id="KW-0479">Metal-binding</keyword>
<keyword id="KW-0489">Methyltransferase</keyword>
<keyword id="KW-1185">Reference proteome</keyword>
<keyword id="KW-0949">S-adenosyl-L-methionine</keyword>
<keyword id="KW-0808">Transferase</keyword>
<evidence type="ECO:0000250" key="1"/>
<evidence type="ECO:0000255" key="2">
    <source>
        <dbReference type="PROSITE-ProRule" id="PRU01024"/>
    </source>
</evidence>
<evidence type="ECO:0000305" key="3"/>
<proteinExistence type="inferred from homology"/>
<feature type="chain" id="PRO_0000162051" description="Uncharacterized RNA methyltransferase ZMO1179">
    <location>
        <begin position="1"/>
        <end position="397"/>
    </location>
</feature>
<feature type="active site" description="Nucleophile" evidence="2">
    <location>
        <position position="354"/>
    </location>
</feature>
<feature type="binding site" evidence="1">
    <location>
        <position position="47"/>
    </location>
    <ligand>
        <name>[4Fe-4S] cluster</name>
        <dbReference type="ChEBI" id="CHEBI:49883"/>
    </ligand>
</feature>
<feature type="binding site" evidence="1">
    <location>
        <position position="53"/>
    </location>
    <ligand>
        <name>[4Fe-4S] cluster</name>
        <dbReference type="ChEBI" id="CHEBI:49883"/>
    </ligand>
</feature>
<feature type="binding site" evidence="1">
    <location>
        <position position="56"/>
    </location>
    <ligand>
        <name>[4Fe-4S] cluster</name>
        <dbReference type="ChEBI" id="CHEBI:49883"/>
    </ligand>
</feature>
<feature type="binding site" evidence="1">
    <location>
        <position position="131"/>
    </location>
    <ligand>
        <name>[4Fe-4S] cluster</name>
        <dbReference type="ChEBI" id="CHEBI:49883"/>
    </ligand>
</feature>
<feature type="binding site" evidence="2">
    <location>
        <position position="235"/>
    </location>
    <ligand>
        <name>S-adenosyl-L-methionine</name>
        <dbReference type="ChEBI" id="CHEBI:59789"/>
    </ligand>
</feature>
<feature type="binding site" evidence="2">
    <location>
        <position position="262"/>
    </location>
    <ligand>
        <name>S-adenosyl-L-methionine</name>
        <dbReference type="ChEBI" id="CHEBI:59789"/>
    </ligand>
</feature>
<feature type="binding site" evidence="2">
    <location>
        <position position="282"/>
    </location>
    <ligand>
        <name>S-adenosyl-L-methionine</name>
        <dbReference type="ChEBI" id="CHEBI:59789"/>
    </ligand>
</feature>
<feature type="binding site" evidence="2">
    <location>
        <position position="328"/>
    </location>
    <ligand>
        <name>S-adenosyl-L-methionine</name>
        <dbReference type="ChEBI" id="CHEBI:59789"/>
    </ligand>
</feature>
<feature type="sequence conflict" description="In Ref. 1; AAD21539." evidence="3" ref="1">
    <original>K</original>
    <variation>I</variation>
    <location>
        <position position="136"/>
    </location>
</feature>
<dbReference type="EC" id="2.1.1.-"/>
<dbReference type="EMBL" id="AF088896">
    <property type="protein sequence ID" value="AAD21539.1"/>
    <property type="molecule type" value="Genomic_DNA"/>
</dbReference>
<dbReference type="EMBL" id="AE008692">
    <property type="protein sequence ID" value="AAV89803.2"/>
    <property type="status" value="ALT_INIT"/>
    <property type="molecule type" value="Genomic_DNA"/>
</dbReference>
<dbReference type="RefSeq" id="WP_017466424.1">
    <property type="nucleotide sequence ID" value="NZ_CP035711.1"/>
</dbReference>
<dbReference type="SMR" id="Q9X3W2"/>
<dbReference type="STRING" id="264203.ZMO1179"/>
<dbReference type="KEGG" id="zmo:ZMO1179"/>
<dbReference type="eggNOG" id="COG2265">
    <property type="taxonomic scope" value="Bacteria"/>
</dbReference>
<dbReference type="HOGENOM" id="CLU_014689_8_0_5"/>
<dbReference type="Proteomes" id="UP000001173">
    <property type="component" value="Chromosome"/>
</dbReference>
<dbReference type="GO" id="GO:0051539">
    <property type="term" value="F:4 iron, 4 sulfur cluster binding"/>
    <property type="evidence" value="ECO:0007669"/>
    <property type="project" value="UniProtKB-KW"/>
</dbReference>
<dbReference type="GO" id="GO:0046872">
    <property type="term" value="F:metal ion binding"/>
    <property type="evidence" value="ECO:0007669"/>
    <property type="project" value="UniProtKB-KW"/>
</dbReference>
<dbReference type="GO" id="GO:0008173">
    <property type="term" value="F:RNA methyltransferase activity"/>
    <property type="evidence" value="ECO:0007669"/>
    <property type="project" value="InterPro"/>
</dbReference>
<dbReference type="GO" id="GO:0032259">
    <property type="term" value="P:methylation"/>
    <property type="evidence" value="ECO:0007669"/>
    <property type="project" value="UniProtKB-KW"/>
</dbReference>
<dbReference type="GO" id="GO:0006396">
    <property type="term" value="P:RNA processing"/>
    <property type="evidence" value="ECO:0007669"/>
    <property type="project" value="InterPro"/>
</dbReference>
<dbReference type="Gene3D" id="2.40.50.1070">
    <property type="match status" value="1"/>
</dbReference>
<dbReference type="Gene3D" id="3.40.50.150">
    <property type="entry name" value="Vaccinia Virus protein VP39"/>
    <property type="match status" value="1"/>
</dbReference>
<dbReference type="InterPro" id="IPR030390">
    <property type="entry name" value="MeTrfase_TrmA_AS"/>
</dbReference>
<dbReference type="InterPro" id="IPR029063">
    <property type="entry name" value="SAM-dependent_MTases_sf"/>
</dbReference>
<dbReference type="InterPro" id="IPR010280">
    <property type="entry name" value="U5_MeTrfase_fam"/>
</dbReference>
<dbReference type="PANTHER" id="PTHR11061">
    <property type="entry name" value="RNA M5U METHYLTRANSFERASE"/>
    <property type="match status" value="1"/>
</dbReference>
<dbReference type="PANTHER" id="PTHR11061:SF30">
    <property type="entry name" value="TRNA (URACIL(54)-C(5))-METHYLTRANSFERASE"/>
    <property type="match status" value="1"/>
</dbReference>
<dbReference type="Pfam" id="PF05958">
    <property type="entry name" value="tRNA_U5-meth_tr"/>
    <property type="match status" value="1"/>
</dbReference>
<dbReference type="SUPFAM" id="SSF53335">
    <property type="entry name" value="S-adenosyl-L-methionine-dependent methyltransferases"/>
    <property type="match status" value="1"/>
</dbReference>
<dbReference type="PROSITE" id="PS51687">
    <property type="entry name" value="SAM_MT_RNA_M5U"/>
    <property type="match status" value="1"/>
</dbReference>
<dbReference type="PROSITE" id="PS01230">
    <property type="entry name" value="TRMA_1"/>
    <property type="match status" value="1"/>
</dbReference>
<name>Y1179_ZYMMO</name>
<organism>
    <name type="scientific">Zymomonas mobilis subsp. mobilis (strain ATCC 31821 / ZM4 / CP4)</name>
    <dbReference type="NCBI Taxonomy" id="264203"/>
    <lineage>
        <taxon>Bacteria</taxon>
        <taxon>Pseudomonadati</taxon>
        <taxon>Pseudomonadota</taxon>
        <taxon>Alphaproteobacteria</taxon>
        <taxon>Sphingomonadales</taxon>
        <taxon>Zymomonadaceae</taxon>
        <taxon>Zymomonas</taxon>
    </lineage>
</organism>
<accession>Q9X3W2</accession>
<accession>Q5NNA7</accession>
<comment type="similarity">
    <text evidence="2">Belongs to the class I-like SAM-binding methyltransferase superfamily. RNA M5U methyltransferase family.</text>
</comment>
<comment type="sequence caution" evidence="3">
    <conflict type="erroneous initiation">
        <sequence resource="EMBL-CDS" id="AAV89803"/>
    </conflict>
</comment>
<reference key="1">
    <citation type="submission" date="1998-08" db="EMBL/GenBank/DDBJ databases">
        <authorList>
            <person name="Lee H.J."/>
            <person name="Kang H.S."/>
        </authorList>
    </citation>
    <scope>NUCLEOTIDE SEQUENCE [GENOMIC DNA]</scope>
    <source>
        <strain>ATCC 31821 / ZM4 / CP4</strain>
    </source>
</reference>
<reference key="2">
    <citation type="journal article" date="2005" name="Nat. Biotechnol.">
        <title>The genome sequence of the ethanologenic bacterium Zymomonas mobilis ZM4.</title>
        <authorList>
            <person name="Seo J.-S."/>
            <person name="Chong H."/>
            <person name="Park H.S."/>
            <person name="Yoon K.-O."/>
            <person name="Jung C."/>
            <person name="Kim J.J."/>
            <person name="Hong J.H."/>
            <person name="Kim H."/>
            <person name="Kim J.-H."/>
            <person name="Kil J.-I."/>
            <person name="Park C.J."/>
            <person name="Oh H.-M."/>
            <person name="Lee J.-S."/>
            <person name="Jin S.-J."/>
            <person name="Um H.-W."/>
            <person name="Lee H.-J."/>
            <person name="Oh S.-J."/>
            <person name="Kim J.Y."/>
            <person name="Kang H.L."/>
            <person name="Lee S.Y."/>
            <person name="Lee K.J."/>
            <person name="Kang H.S."/>
        </authorList>
    </citation>
    <scope>NUCLEOTIDE SEQUENCE [LARGE SCALE GENOMIC DNA]</scope>
    <source>
        <strain>ATCC 31821 / ZM4 / CP4</strain>
    </source>
</reference>
<gene>
    <name type="ordered locus">ZMO1179</name>
</gene>